<sequence>MSSESDDKRARTRSKTLRGPPETTGADLSCPTPGCTGSGHVRGKYSRHRSLQSCPLAKKRKLEDAETEHLVSKRKSHPLRLALDEGYRMDSDGSEDAEVKDVSVSDESEGPLEEAEAEMSGQEEIHHPQTAEGKSLIKPHFDSNPTSSPSGFSKSSYSSYQGIIATSLLNLGQIAEEALVKEDSVSVAKLSPTVVHQLQDEAAMGVNSDEGEKDLFIQPEDVEEVIEVTSERSQEPCPQSLKDMVSEESSKQKGVLGHEEEGEEEEEDEEEEDEEEEEEGEEGEEEEEEEEEEEEEEDEEEEEEEEEAAPNVIFGEDTSHTSVQKASPEFRGPELSSPKPEYSVIVEVRSDDDKDEDSRSQKSAVTDESEMYDMMTRGNLGLLEQAIALKAEQVRAVCESGCPPAEQGHLGPGEPGKMAKPLDVVRKSCYSKDPSRVEKREIKCPTPGCDGTGHVTGLYPHHRSLSGCPHKDRIPPEILAMHENVLKCPTPGCTGQGHVNSNRNTHRSLSGCPIAAAEKLAKSHEKQQLQTGDPPKNNSNSDRILRPMCFVKQLEVPPYGSYRPNVAPATPRANLAKELEKFSKVTFDYASFDAQVFGKRMLAPKIQTSETSPKAFQCFDYSHDAEAAHMAATAILNLSTRCWEMPENLSTKPQDLPSKAVDIEVDENGTLDLSMHKHRKRENTFPSSSSCSSSPGVKSPDVSQRQSSTSAPSSSMTSPQSSQASRQDEWDRPLDYTKPSRLREEEPEESEPAAHSFASSEADDQEVSEENFEERKYPGEVTLTNFKLKFLSKDIKKELLTCPTPGCDGSGHITGNYASHRSLSGCPLADKSLRNLMAAHSADLKCPTPGCDGSGHITGNYASHRSLSGCPRAKKSGLKVAPTKDDKEDPELMKCPVPGCVGLGHISGKYASHRSASGCPLAARRQKEGALNGSSFSWKSLKNEGPTCPTPGCDGSGHANGSFLTHRSLSGCPRATFAGKKGKLSGDEILSPKFKTSDVLENDEEIKQLNQEIRDLNESNSEMEAAMVQLQSQISSMEKNLKNIEEENKLIEEQNEALFLELSGLSQALIQSLANIRLPHMEPICEQNFDAYVNTLTDMYSNQDCYQNPENKGLLETIKQAVRGIQV</sequence>
<gene>
    <name type="primary">Myt1</name>
    <name type="synonym">Kiaa0835</name>
    <name type="synonym">Nzf2</name>
</gene>
<accession>Q8CFC2</accession>
<accession>B0R0C3</accession>
<accession>B0R0C4</accession>
<accession>O08995</accession>
<accession>Q8CFH1</accession>
<organism>
    <name type="scientific">Mus musculus</name>
    <name type="common">Mouse</name>
    <dbReference type="NCBI Taxonomy" id="10090"/>
    <lineage>
        <taxon>Eukaryota</taxon>
        <taxon>Metazoa</taxon>
        <taxon>Chordata</taxon>
        <taxon>Craniata</taxon>
        <taxon>Vertebrata</taxon>
        <taxon>Euteleostomi</taxon>
        <taxon>Mammalia</taxon>
        <taxon>Eutheria</taxon>
        <taxon>Euarchontoglires</taxon>
        <taxon>Glires</taxon>
        <taxon>Rodentia</taxon>
        <taxon>Myomorpha</taxon>
        <taxon>Muroidea</taxon>
        <taxon>Muridae</taxon>
        <taxon>Murinae</taxon>
        <taxon>Mus</taxon>
        <taxon>Mus</taxon>
    </lineage>
</organism>
<proteinExistence type="evidence at protein level"/>
<feature type="chain" id="PRO_0000096677" description="Myelin transcription factor 1">
    <location>
        <begin position="1"/>
        <end position="1127"/>
    </location>
</feature>
<feature type="zinc finger region" description="CCHHC-type 1" evidence="2">
    <location>
        <begin position="21"/>
        <end position="64"/>
    </location>
</feature>
<feature type="zinc finger region" description="CCHHC-type 2" evidence="2">
    <location>
        <begin position="435"/>
        <end position="478"/>
    </location>
</feature>
<feature type="zinc finger region" description="CCHHC-type 3" evidence="2">
    <location>
        <begin position="479"/>
        <end position="522"/>
    </location>
</feature>
<feature type="zinc finger region" description="CCHHC-type 4" evidence="2">
    <location>
        <begin position="793"/>
        <end position="836"/>
    </location>
</feature>
<feature type="zinc finger region" description="CCHHC-type 5" evidence="2">
    <location>
        <begin position="837"/>
        <end position="880"/>
    </location>
</feature>
<feature type="zinc finger region" description="CCHHC-type 6" evidence="2">
    <location>
        <begin position="886"/>
        <end position="929"/>
    </location>
</feature>
<feature type="zinc finger region" description="CCHHC-type 7" evidence="2">
    <location>
        <begin position="939"/>
        <end position="982"/>
    </location>
</feature>
<feature type="region of interest" description="Disordered" evidence="3">
    <location>
        <begin position="1"/>
        <end position="157"/>
    </location>
</feature>
<feature type="region of interest" description="Disordered" evidence="3">
    <location>
        <begin position="204"/>
        <end position="369"/>
    </location>
</feature>
<feature type="region of interest" description="Disordered" evidence="3">
    <location>
        <begin position="520"/>
        <end position="542"/>
    </location>
</feature>
<feature type="region of interest" description="Disordered" evidence="3">
    <location>
        <begin position="670"/>
        <end position="776"/>
    </location>
</feature>
<feature type="compositionally biased region" description="Basic residues" evidence="3">
    <location>
        <begin position="41"/>
        <end position="50"/>
    </location>
</feature>
<feature type="compositionally biased region" description="Basic and acidic residues" evidence="3">
    <location>
        <begin position="61"/>
        <end position="71"/>
    </location>
</feature>
<feature type="compositionally biased region" description="Basic and acidic residues" evidence="3">
    <location>
        <begin position="82"/>
        <end position="103"/>
    </location>
</feature>
<feature type="compositionally biased region" description="Acidic residues" evidence="3">
    <location>
        <begin position="104"/>
        <end position="117"/>
    </location>
</feature>
<feature type="compositionally biased region" description="Low complexity" evidence="3">
    <location>
        <begin position="143"/>
        <end position="157"/>
    </location>
</feature>
<feature type="compositionally biased region" description="Basic and acidic residues" evidence="3">
    <location>
        <begin position="244"/>
        <end position="259"/>
    </location>
</feature>
<feature type="compositionally biased region" description="Acidic residues" evidence="3">
    <location>
        <begin position="260"/>
        <end position="308"/>
    </location>
</feature>
<feature type="compositionally biased region" description="Basic and acidic residues" evidence="3">
    <location>
        <begin position="348"/>
        <end position="360"/>
    </location>
</feature>
<feature type="compositionally biased region" description="Polar residues" evidence="3">
    <location>
        <begin position="528"/>
        <end position="542"/>
    </location>
</feature>
<feature type="compositionally biased region" description="Low complexity" evidence="3">
    <location>
        <begin position="703"/>
        <end position="725"/>
    </location>
</feature>
<feature type="compositionally biased region" description="Basic and acidic residues" evidence="3">
    <location>
        <begin position="726"/>
        <end position="735"/>
    </location>
</feature>
<feature type="compositionally biased region" description="Acidic residues" evidence="3">
    <location>
        <begin position="761"/>
        <end position="772"/>
    </location>
</feature>
<feature type="binding site" evidence="2">
    <location>
        <position position="30"/>
    </location>
    <ligand>
        <name>Zn(2+)</name>
        <dbReference type="ChEBI" id="CHEBI:29105"/>
        <label>1</label>
    </ligand>
</feature>
<feature type="binding site" evidence="2">
    <location>
        <position position="35"/>
    </location>
    <ligand>
        <name>Zn(2+)</name>
        <dbReference type="ChEBI" id="CHEBI:29105"/>
        <label>1</label>
    </ligand>
</feature>
<feature type="binding site" evidence="2">
    <location>
        <position position="48"/>
    </location>
    <ligand>
        <name>Zn(2+)</name>
        <dbReference type="ChEBI" id="CHEBI:29105"/>
        <label>1</label>
    </ligand>
</feature>
<feature type="binding site" evidence="2">
    <location>
        <position position="54"/>
    </location>
    <ligand>
        <name>Zn(2+)</name>
        <dbReference type="ChEBI" id="CHEBI:29105"/>
        <label>1</label>
    </ligand>
</feature>
<feature type="binding site" evidence="2">
    <location>
        <position position="444"/>
    </location>
    <ligand>
        <name>Zn(2+)</name>
        <dbReference type="ChEBI" id="CHEBI:29105"/>
        <label>2</label>
    </ligand>
</feature>
<feature type="binding site" evidence="2">
    <location>
        <position position="449"/>
    </location>
    <ligand>
        <name>Zn(2+)</name>
        <dbReference type="ChEBI" id="CHEBI:29105"/>
        <label>2</label>
    </ligand>
</feature>
<feature type="binding site" evidence="2">
    <location>
        <position position="462"/>
    </location>
    <ligand>
        <name>Zn(2+)</name>
        <dbReference type="ChEBI" id="CHEBI:29105"/>
        <label>2</label>
    </ligand>
</feature>
<feature type="binding site" evidence="2">
    <location>
        <position position="468"/>
    </location>
    <ligand>
        <name>Zn(2+)</name>
        <dbReference type="ChEBI" id="CHEBI:29105"/>
        <label>2</label>
    </ligand>
</feature>
<feature type="binding site" evidence="2">
    <location>
        <position position="488"/>
    </location>
    <ligand>
        <name>Zn(2+)</name>
        <dbReference type="ChEBI" id="CHEBI:29105"/>
        <label>3</label>
    </ligand>
</feature>
<feature type="binding site" evidence="2">
    <location>
        <position position="493"/>
    </location>
    <ligand>
        <name>Zn(2+)</name>
        <dbReference type="ChEBI" id="CHEBI:29105"/>
        <label>3</label>
    </ligand>
</feature>
<feature type="binding site" evidence="2">
    <location>
        <position position="506"/>
    </location>
    <ligand>
        <name>Zn(2+)</name>
        <dbReference type="ChEBI" id="CHEBI:29105"/>
        <label>3</label>
    </ligand>
</feature>
<feature type="binding site" evidence="2">
    <location>
        <position position="512"/>
    </location>
    <ligand>
        <name>Zn(2+)</name>
        <dbReference type="ChEBI" id="CHEBI:29105"/>
        <label>3</label>
    </ligand>
</feature>
<feature type="binding site" evidence="2">
    <location>
        <position position="802"/>
    </location>
    <ligand>
        <name>Zn(2+)</name>
        <dbReference type="ChEBI" id="CHEBI:29105"/>
        <label>4</label>
    </ligand>
</feature>
<feature type="binding site" evidence="2">
    <location>
        <position position="807"/>
    </location>
    <ligand>
        <name>Zn(2+)</name>
        <dbReference type="ChEBI" id="CHEBI:29105"/>
        <label>4</label>
    </ligand>
</feature>
<feature type="binding site" evidence="2">
    <location>
        <position position="820"/>
    </location>
    <ligand>
        <name>Zn(2+)</name>
        <dbReference type="ChEBI" id="CHEBI:29105"/>
        <label>4</label>
    </ligand>
</feature>
<feature type="binding site" evidence="2">
    <location>
        <position position="826"/>
    </location>
    <ligand>
        <name>Zn(2+)</name>
        <dbReference type="ChEBI" id="CHEBI:29105"/>
        <label>4</label>
    </ligand>
</feature>
<feature type="binding site" evidence="2">
    <location>
        <position position="846"/>
    </location>
    <ligand>
        <name>Zn(2+)</name>
        <dbReference type="ChEBI" id="CHEBI:29105"/>
        <label>5</label>
    </ligand>
</feature>
<feature type="binding site" evidence="2">
    <location>
        <position position="851"/>
    </location>
    <ligand>
        <name>Zn(2+)</name>
        <dbReference type="ChEBI" id="CHEBI:29105"/>
        <label>5</label>
    </ligand>
</feature>
<feature type="binding site" evidence="2">
    <location>
        <position position="864"/>
    </location>
    <ligand>
        <name>Zn(2+)</name>
        <dbReference type="ChEBI" id="CHEBI:29105"/>
        <label>5</label>
    </ligand>
</feature>
<feature type="binding site" evidence="2">
    <location>
        <position position="870"/>
    </location>
    <ligand>
        <name>Zn(2+)</name>
        <dbReference type="ChEBI" id="CHEBI:29105"/>
        <label>5</label>
    </ligand>
</feature>
<feature type="binding site" evidence="2">
    <location>
        <position position="895"/>
    </location>
    <ligand>
        <name>Zn(2+)</name>
        <dbReference type="ChEBI" id="CHEBI:29105"/>
        <label>6</label>
    </ligand>
</feature>
<feature type="binding site" evidence="2">
    <location>
        <position position="900"/>
    </location>
    <ligand>
        <name>Zn(2+)</name>
        <dbReference type="ChEBI" id="CHEBI:29105"/>
        <label>6</label>
    </ligand>
</feature>
<feature type="binding site" evidence="2">
    <location>
        <position position="913"/>
    </location>
    <ligand>
        <name>Zn(2+)</name>
        <dbReference type="ChEBI" id="CHEBI:29105"/>
        <label>6</label>
    </ligand>
</feature>
<feature type="binding site" evidence="2">
    <location>
        <position position="919"/>
    </location>
    <ligand>
        <name>Zn(2+)</name>
        <dbReference type="ChEBI" id="CHEBI:29105"/>
        <label>6</label>
    </ligand>
</feature>
<feature type="binding site" evidence="2">
    <location>
        <position position="948"/>
    </location>
    <ligand>
        <name>Zn(2+)</name>
        <dbReference type="ChEBI" id="CHEBI:29105"/>
        <label>7</label>
    </ligand>
</feature>
<feature type="binding site" evidence="2">
    <location>
        <position position="953"/>
    </location>
    <ligand>
        <name>Zn(2+)</name>
        <dbReference type="ChEBI" id="CHEBI:29105"/>
        <label>7</label>
    </ligand>
</feature>
<feature type="binding site" evidence="2">
    <location>
        <position position="966"/>
    </location>
    <ligand>
        <name>Zn(2+)</name>
        <dbReference type="ChEBI" id="CHEBI:29105"/>
        <label>7</label>
    </ligand>
</feature>
<feature type="binding site" evidence="2">
    <location>
        <position position="972"/>
    </location>
    <ligand>
        <name>Zn(2+)</name>
        <dbReference type="ChEBI" id="CHEBI:29105"/>
        <label>7</label>
    </ligand>
</feature>
<feature type="splice variant" id="VSP_015720" description="In isoform 2." evidence="7">
    <original>MSSESDDKRARTRSKTLRGPPETTGADLSCPTPGCTGSGHVRGKYSRHRSLQSCPLAKKRKLEDAETEHLVSKRKSHPLRLALDEGYRMDSDGSEDAEVKDVSVSDESEGPLEEAEAEMSGQEEIHHPQTAEGKSLIKPHFDSNPTSSPSGF</original>
    <variation>MMDGIGIRTEKYQSNLAKIDSFLVFESRQKADRMAYSSFPYFLSYSAESGQVGIGGELATVGSRDLETFPHALFKAPLFLVLCRKKPHQAPFLLQPHKQPFWL</variation>
    <location>
        <begin position="1"/>
        <end position="152"/>
    </location>
</feature>
<feature type="splice variant" id="VSP_015721" description="In isoform 3." evidence="6">
    <location>
        <begin position="508"/>
        <end position="545"/>
    </location>
</feature>
<feature type="sequence conflict" description="In Ref. 1; AAC53456." evidence="8" ref="1">
    <original>P</original>
    <variation>R</variation>
    <location>
        <position position="238"/>
    </location>
</feature>
<feature type="sequence conflict" description="In Ref. 1; AAC53456." evidence="8" ref="1">
    <original>T</original>
    <variation>A</variation>
    <location>
        <position position="446"/>
    </location>
</feature>
<feature type="sequence conflict" description="In Ref. 1; AAC53456." evidence="8" ref="1">
    <original>N</original>
    <variation>Y</variation>
    <location>
        <position position="502"/>
    </location>
</feature>
<feature type="sequence conflict" description="In Ref. 1; AAC53456." evidence="8" ref="1">
    <original>D</original>
    <variation>G</variation>
    <location>
        <position position="701"/>
    </location>
</feature>
<feature type="sequence conflict" description="In Ref. 1; AAC53456." evidence="8" ref="1">
    <original>K</original>
    <variation>R</variation>
    <location>
        <position position="879"/>
    </location>
</feature>
<feature type="sequence conflict" description="In Ref. 1; AAC53456." evidence="8" ref="1">
    <original>E</original>
    <variation>G</variation>
    <location>
        <position position="1022"/>
    </location>
</feature>
<feature type="sequence conflict" description="In Ref. 1; AAC53456." evidence="8" ref="1">
    <original>K</original>
    <variation>R</variation>
    <location>
        <position position="1039"/>
    </location>
</feature>
<feature type="strand" evidence="11">
    <location>
        <begin position="801"/>
        <end position="803"/>
    </location>
</feature>
<feature type="strand" evidence="11">
    <location>
        <begin position="813"/>
        <end position="816"/>
    </location>
</feature>
<feature type="strand" evidence="11">
    <location>
        <begin position="821"/>
        <end position="824"/>
    </location>
</feature>
<feature type="strand" evidence="10">
    <location>
        <begin position="853"/>
        <end position="855"/>
    </location>
</feature>
<feature type="strand" evidence="9">
    <location>
        <begin position="857"/>
        <end position="860"/>
    </location>
</feature>
<feature type="strand" evidence="9">
    <location>
        <begin position="865"/>
        <end position="869"/>
    </location>
</feature>
<feature type="turn" evidence="10">
    <location>
        <begin position="871"/>
        <end position="874"/>
    </location>
</feature>
<comment type="function">
    <text evidence="1 5">Binds to the promoter region of genes encoding proteolipid proteins of the central nervous system. May play a role in the development of neurons and oligodendroglia in the CNS. May regulate a critical transition point in oligodendrocyte lineage development by modulating oligodendrocyte progenitor proliferation relative to terminal differentiation and up-regulation of myelin gene transcription (By similarity).</text>
</comment>
<comment type="subunit">
    <text evidence="1">Interacts with STEAP3.</text>
</comment>
<comment type="subcellular location">
    <subcellularLocation>
        <location evidence="1">Nucleus</location>
    </subcellularLocation>
</comment>
<comment type="alternative products">
    <event type="alternative splicing"/>
    <isoform>
        <id>Q8CFC2-1</id>
        <name>1</name>
        <name>NZF-2b</name>
        <sequence type="displayed"/>
    </isoform>
    <isoform>
        <id>Q8CFC2-2</id>
        <name>2</name>
        <name>NZF-2a</name>
        <sequence type="described" ref="VSP_015720"/>
    </isoform>
    <isoform>
        <id>Q8CFC2-3</id>
        <name>3</name>
        <sequence type="described" ref="VSP_015721"/>
    </isoform>
</comment>
<comment type="tissue specificity">
    <text evidence="4">Isoform 1 is more predominant than isoform 2 at all stages of development and adulthood. Expressed in differentiated neurons especially at higher levels in newly generated ones.</text>
</comment>
<comment type="developmental stage">
    <text evidence="4">Isoform 1 is detected in the earliest born neurons. At 9.5 dpc it is detected in the ventrolateral part of the spinal cord, which later become motor neurons and is also detected in the dispersed cells of the alar plate interneurons. During spinal cord development, the expression is highest in the latest born neurons (the subventricular zone). Detected in the early differentiated neurons within the neuroepithelium and the neural crest cells at 9.5 dpc. At 12.5 dpc, detected in the differentiated neurons within the forebrain, midbrain, and hindbrain. In these neurons, the expression level is highest in the latest born neurons and is also detected in the differentiated neurons of the sensory organs and the peripheral ganglia.</text>
</comment>
<comment type="domain">
    <text>Contains 7 zinc fingers of the C2HC class arranged in two widely separated clusters. These two domains of DNA binding can function independently and recognize the same DNA sequence.</text>
</comment>
<comment type="similarity">
    <text evidence="8">Belongs to the MYT1 family.</text>
</comment>
<comment type="sequence caution" evidence="8">
    <conflict type="erroneous initiation">
        <sequence resource="EMBL-CDS" id="BAC41451"/>
    </conflict>
</comment>
<keyword id="KW-0002">3D-structure</keyword>
<keyword id="KW-0025">Alternative splicing</keyword>
<keyword id="KW-0217">Developmental protein</keyword>
<keyword id="KW-0221">Differentiation</keyword>
<keyword id="KW-0903">Direct protein sequencing</keyword>
<keyword id="KW-0238">DNA-binding</keyword>
<keyword id="KW-0479">Metal-binding</keyword>
<keyword id="KW-0524">Neurogenesis</keyword>
<keyword id="KW-0539">Nucleus</keyword>
<keyword id="KW-1185">Reference proteome</keyword>
<keyword id="KW-0677">Repeat</keyword>
<keyword id="KW-0804">Transcription</keyword>
<keyword id="KW-0805">Transcription regulation</keyword>
<keyword id="KW-0862">Zinc</keyword>
<keyword id="KW-0863">Zinc-finger</keyword>
<evidence type="ECO:0000250" key="1"/>
<evidence type="ECO:0000255" key="2">
    <source>
        <dbReference type="PROSITE-ProRule" id="PRU01143"/>
    </source>
</evidence>
<evidence type="ECO:0000256" key="3">
    <source>
        <dbReference type="SAM" id="MobiDB-lite"/>
    </source>
</evidence>
<evidence type="ECO:0000269" key="4">
    <source>
    </source>
</evidence>
<evidence type="ECO:0000269" key="5">
    <source>
    </source>
</evidence>
<evidence type="ECO:0000303" key="6">
    <source>
    </source>
</evidence>
<evidence type="ECO:0000303" key="7">
    <source>
    </source>
</evidence>
<evidence type="ECO:0000305" key="8"/>
<evidence type="ECO:0007829" key="9">
    <source>
        <dbReference type="PDB" id="2JX1"/>
    </source>
</evidence>
<evidence type="ECO:0007829" key="10">
    <source>
        <dbReference type="PDB" id="2JYD"/>
    </source>
</evidence>
<evidence type="ECO:0007829" key="11">
    <source>
        <dbReference type="PDB" id="2MF8"/>
    </source>
</evidence>
<reference key="1">
    <citation type="journal article" date="1997" name="J. Neurosci. Res.">
        <title>Myelin transcription factor 1 (Myt1) of the oligodendrocyte lineage, along with a closely related CCHC zinc finger, is expressed in developing neurons in the mammalian central nervous system.</title>
        <authorList>
            <person name="Kim J.G."/>
            <person name="Armstrong R.C."/>
            <person name="Agoston D.V."/>
            <person name="Robinsky A."/>
            <person name="Wiese C."/>
            <person name="Nagle J."/>
            <person name="Hudson L.D."/>
        </authorList>
    </citation>
    <scope>NUCLEOTIDE SEQUENCE [MRNA] (ISOFORM 2)</scope>
    <scope>FUNCTION</scope>
</reference>
<reference key="2">
    <citation type="journal article" date="2002" name="Mech. Dev.">
        <title>NZF-2b is a novel predominant form of mouse NZF-2/MyT1, expressed in differentiated neurons especially at higher levels in newly generated ones.</title>
        <authorList>
            <person name="Matsushita F."/>
            <person name="Kameyama T."/>
            <person name="Marunouchi T."/>
        </authorList>
    </citation>
    <scope>NUCLEOTIDE SEQUENCE [MRNA] (ISOFORM 1)</scope>
    <scope>TISSUE SPECIFICITY</scope>
    <scope>DEVELOPMENTAL STAGE</scope>
    <source>
        <strain>ICR</strain>
        <tissue>Brain</tissue>
    </source>
</reference>
<reference key="3">
    <citation type="journal article" date="2002" name="DNA Res.">
        <title>Prediction of the coding sequences of mouse homologues of KIAA gene: I. The complete nucleotide sequences of 100 mouse KIAA-homologous cDNAs identified by screening of terminal sequences of cDNA clones randomly sampled from size-fractionated libraries.</title>
        <authorList>
            <person name="Okazaki N."/>
            <person name="Kikuno R."/>
            <person name="Ohara R."/>
            <person name="Inamoto S."/>
            <person name="Hara Y."/>
            <person name="Nagase T."/>
            <person name="Ohara O."/>
            <person name="Koga H."/>
        </authorList>
    </citation>
    <scope>NUCLEOTIDE SEQUENCE [LARGE SCALE MRNA] (ISOFORM 3)</scope>
    <source>
        <tissue>Fetal brain</tissue>
    </source>
</reference>
<reference key="4">
    <citation type="submission" date="2004-06" db="EMBL/GenBank/DDBJ databases">
        <authorList>
            <person name="Okazaki N."/>
            <person name="Kikuno R."/>
            <person name="Nagase T."/>
            <person name="Ohara O."/>
            <person name="Koga H."/>
        </authorList>
    </citation>
    <scope>SEQUENCE REVISION</scope>
</reference>
<reference key="5">
    <citation type="journal article" date="2009" name="PLoS Biol.">
        <title>Lineage-specific biology revealed by a finished genome assembly of the mouse.</title>
        <authorList>
            <person name="Church D.M."/>
            <person name="Goodstadt L."/>
            <person name="Hillier L.W."/>
            <person name="Zody M.C."/>
            <person name="Goldstein S."/>
            <person name="She X."/>
            <person name="Bult C.J."/>
            <person name="Agarwala R."/>
            <person name="Cherry J.L."/>
            <person name="DiCuccio M."/>
            <person name="Hlavina W."/>
            <person name="Kapustin Y."/>
            <person name="Meric P."/>
            <person name="Maglott D."/>
            <person name="Birtle Z."/>
            <person name="Marques A.C."/>
            <person name="Graves T."/>
            <person name="Zhou S."/>
            <person name="Teague B."/>
            <person name="Potamousis K."/>
            <person name="Churas C."/>
            <person name="Place M."/>
            <person name="Herschleb J."/>
            <person name="Runnheim R."/>
            <person name="Forrest D."/>
            <person name="Amos-Landgraf J."/>
            <person name="Schwartz D.C."/>
            <person name="Cheng Z."/>
            <person name="Lindblad-Toh K."/>
            <person name="Eichler E.E."/>
            <person name="Ponting C.P."/>
        </authorList>
    </citation>
    <scope>NUCLEOTIDE SEQUENCE [LARGE SCALE GENOMIC DNA]</scope>
    <source>
        <strain>C57BL/6J</strain>
    </source>
</reference>
<reference key="6">
    <citation type="journal article" date="2004" name="Genome Res.">
        <title>The status, quality, and expansion of the NIH full-length cDNA project: the Mammalian Gene Collection (MGC).</title>
        <authorList>
            <consortium name="The MGC Project Team"/>
        </authorList>
    </citation>
    <scope>NUCLEOTIDE SEQUENCE [LARGE SCALE MRNA] (ISOFORM 1)</scope>
    <source>
        <strain>C57BL/6J</strain>
        <tissue>Brain</tissue>
    </source>
</reference>
<reference key="7">
    <citation type="submission" date="2009-01" db="UniProtKB">
        <authorList>
            <person name="Lubec G."/>
            <person name="Sunyer B."/>
            <person name="Chen W.-Q."/>
        </authorList>
    </citation>
    <scope>PROTEIN SEQUENCE OF 537-543</scope>
    <scope>IDENTIFICATION BY MASS SPECTROMETRY</scope>
    <source>
        <strain>OF1</strain>
        <tissue>Hippocampus</tissue>
    </source>
</reference>
<reference key="8">
    <citation type="journal article" date="2008" name="J. Biol. Chem.">
        <title>Structural and biophysical analysis of the DNA binding properties of myelin transcription factor 1.</title>
        <authorList>
            <person name="Gamsjaeger R."/>
            <person name="Swanton M.K."/>
            <person name="Kobus F.J."/>
            <person name="Lehtomaki E."/>
            <person name="Lowry J.A."/>
            <person name="Kwan A.H."/>
            <person name="Matthews J.M."/>
            <person name="Mackay J.P."/>
        </authorList>
    </citation>
    <scope>STRUCTURE BY NMR OF 837-878</scope>
    <scope>DNA-BINDING</scope>
</reference>
<protein>
    <recommendedName>
        <fullName>Myelin transcription factor 1</fullName>
        <shortName>MyT1</shortName>
    </recommendedName>
    <alternativeName>
        <fullName>Neural zinc finger factor 2</fullName>
        <shortName>NZF-2</shortName>
    </alternativeName>
</protein>
<name>MYT1_MOUSE</name>
<dbReference type="EMBL" id="AF004294">
    <property type="protein sequence ID" value="AAC53456.1"/>
    <property type="molecule type" value="mRNA"/>
</dbReference>
<dbReference type="EMBL" id="AB082378">
    <property type="protein sequence ID" value="BAC16512.1"/>
    <property type="molecule type" value="mRNA"/>
</dbReference>
<dbReference type="EMBL" id="AB093267">
    <property type="protein sequence ID" value="BAC41451.2"/>
    <property type="status" value="ALT_INIT"/>
    <property type="molecule type" value="mRNA"/>
</dbReference>
<dbReference type="EMBL" id="AL845173">
    <property type="status" value="NOT_ANNOTATED_CDS"/>
    <property type="molecule type" value="Genomic_DNA"/>
</dbReference>
<dbReference type="EMBL" id="BC063252">
    <property type="protein sequence ID" value="AAH63252.1"/>
    <property type="molecule type" value="mRNA"/>
</dbReference>
<dbReference type="CCDS" id="CCDS17223.1">
    <molecule id="Q8CFC2-1"/>
</dbReference>
<dbReference type="CCDS" id="CCDS50857.1">
    <molecule id="Q8CFC2-3"/>
</dbReference>
<dbReference type="PIR" id="T42712">
    <property type="entry name" value="T42712"/>
</dbReference>
<dbReference type="RefSeq" id="NP_001165086.1">
    <property type="nucleotide sequence ID" value="NM_001171615.1"/>
</dbReference>
<dbReference type="RefSeq" id="NP_001165087.1">
    <molecule id="Q8CFC2-3"/>
    <property type="nucleotide sequence ID" value="NM_001171616.2"/>
</dbReference>
<dbReference type="RefSeq" id="NP_032691.2">
    <molecule id="Q8CFC2-1"/>
    <property type="nucleotide sequence ID" value="NM_008665.4"/>
</dbReference>
<dbReference type="RefSeq" id="XP_006500640.2">
    <molecule id="Q8CFC2-1"/>
    <property type="nucleotide sequence ID" value="XM_006500577.5"/>
</dbReference>
<dbReference type="RefSeq" id="XP_006500642.2">
    <molecule id="Q8CFC2-3"/>
    <property type="nucleotide sequence ID" value="XM_006500579.5"/>
</dbReference>
<dbReference type="PDB" id="2JX1">
    <property type="method" value="NMR"/>
    <property type="chains" value="A=843-873"/>
</dbReference>
<dbReference type="PDB" id="2JYD">
    <property type="method" value="NMR"/>
    <property type="chains" value="A=837-878"/>
</dbReference>
<dbReference type="PDB" id="2MF8">
    <property type="method" value="NMR"/>
    <property type="chains" value="A=792-878"/>
</dbReference>
<dbReference type="PDBsum" id="2JX1"/>
<dbReference type="PDBsum" id="2JYD"/>
<dbReference type="PDBsum" id="2MF8"/>
<dbReference type="SMR" id="Q8CFC2"/>
<dbReference type="BioGRID" id="201678">
    <property type="interactions" value="1"/>
</dbReference>
<dbReference type="FunCoup" id="Q8CFC2">
    <property type="interactions" value="2388"/>
</dbReference>
<dbReference type="STRING" id="10090.ENSMUSP00000079900"/>
<dbReference type="GlyGen" id="Q8CFC2">
    <property type="glycosylation" value="7 sites, 1 N-linked glycan (1 site)"/>
</dbReference>
<dbReference type="iPTMnet" id="Q8CFC2"/>
<dbReference type="PhosphoSitePlus" id="Q8CFC2"/>
<dbReference type="PaxDb" id="10090-ENSMUSP00000079900"/>
<dbReference type="ProteomicsDB" id="287548">
    <molecule id="Q8CFC2-1"/>
</dbReference>
<dbReference type="ProteomicsDB" id="287549">
    <molecule id="Q8CFC2-2"/>
</dbReference>
<dbReference type="ProteomicsDB" id="287550">
    <molecule id="Q8CFC2-3"/>
</dbReference>
<dbReference type="Antibodypedia" id="1424">
    <property type="antibodies" value="295 antibodies from 26 providers"/>
</dbReference>
<dbReference type="DNASU" id="17932"/>
<dbReference type="Ensembl" id="ENSMUST00000108756.8">
    <molecule id="Q8CFC2-1"/>
    <property type="protein sequence ID" value="ENSMUSP00000104387.2"/>
    <property type="gene ID" value="ENSMUSG00000010505.17"/>
</dbReference>
<dbReference type="Ensembl" id="ENSMUST00000108757.9">
    <molecule id="Q8CFC2-3"/>
    <property type="protein sequence ID" value="ENSMUSP00000104388.3"/>
    <property type="gene ID" value="ENSMUSG00000010505.17"/>
</dbReference>
<dbReference type="GeneID" id="17932"/>
<dbReference type="KEGG" id="mmu:17932"/>
<dbReference type="UCSC" id="uc008ons.2">
    <molecule id="Q8CFC2-1"/>
    <property type="organism name" value="mouse"/>
</dbReference>
<dbReference type="UCSC" id="uc012cmw.1">
    <molecule id="Q8CFC2-3"/>
    <property type="organism name" value="mouse"/>
</dbReference>
<dbReference type="AGR" id="MGI:1100535"/>
<dbReference type="CTD" id="4661"/>
<dbReference type="MGI" id="MGI:1100535">
    <property type="gene designation" value="Myt1"/>
</dbReference>
<dbReference type="VEuPathDB" id="HostDB:ENSMUSG00000010505"/>
<dbReference type="eggNOG" id="KOG3803">
    <property type="taxonomic scope" value="Eukaryota"/>
</dbReference>
<dbReference type="GeneTree" id="ENSGT00940000156364"/>
<dbReference type="InParanoid" id="Q8CFC2"/>
<dbReference type="OMA" id="APDVIFE"/>
<dbReference type="OrthoDB" id="10069059at2759"/>
<dbReference type="BioGRID-ORCS" id="17932">
    <property type="hits" value="3 hits in 81 CRISPR screens"/>
</dbReference>
<dbReference type="EvolutionaryTrace" id="Q8CFC2"/>
<dbReference type="PRO" id="PR:Q8CFC2"/>
<dbReference type="Proteomes" id="UP000000589">
    <property type="component" value="Chromosome 2"/>
</dbReference>
<dbReference type="RNAct" id="Q8CFC2">
    <property type="molecule type" value="protein"/>
</dbReference>
<dbReference type="Bgee" id="ENSMUSG00000010505">
    <property type="expression patterns" value="Expressed in floor plate of midbrain and 144 other cell types or tissues"/>
</dbReference>
<dbReference type="ExpressionAtlas" id="Q8CFC2">
    <property type="expression patterns" value="baseline and differential"/>
</dbReference>
<dbReference type="GO" id="GO:0005634">
    <property type="term" value="C:nucleus"/>
    <property type="evidence" value="ECO:0000314"/>
    <property type="project" value="MGI"/>
</dbReference>
<dbReference type="GO" id="GO:0000987">
    <property type="term" value="F:cis-regulatory region sequence-specific DNA binding"/>
    <property type="evidence" value="ECO:0000314"/>
    <property type="project" value="MGI"/>
</dbReference>
<dbReference type="GO" id="GO:0001228">
    <property type="term" value="F:DNA-binding transcription activator activity, RNA polymerase II-specific"/>
    <property type="evidence" value="ECO:0000314"/>
    <property type="project" value="NTNU_SB"/>
</dbReference>
<dbReference type="GO" id="GO:0000977">
    <property type="term" value="F:RNA polymerase II transcription regulatory region sequence-specific DNA binding"/>
    <property type="evidence" value="ECO:0000314"/>
    <property type="project" value="NTNU_SB"/>
</dbReference>
<dbReference type="GO" id="GO:0008270">
    <property type="term" value="F:zinc ion binding"/>
    <property type="evidence" value="ECO:0007669"/>
    <property type="project" value="UniProtKB-KW"/>
</dbReference>
<dbReference type="GO" id="GO:0030154">
    <property type="term" value="P:cell differentiation"/>
    <property type="evidence" value="ECO:0007669"/>
    <property type="project" value="UniProtKB-KW"/>
</dbReference>
<dbReference type="GO" id="GO:0060539">
    <property type="term" value="P:diaphragm development"/>
    <property type="evidence" value="ECO:0000315"/>
    <property type="project" value="MGI"/>
</dbReference>
<dbReference type="GO" id="GO:0031018">
    <property type="term" value="P:endocrine pancreas development"/>
    <property type="evidence" value="ECO:0000315"/>
    <property type="project" value="MGI"/>
</dbReference>
<dbReference type="GO" id="GO:0001678">
    <property type="term" value="P:intracellular glucose homeostasis"/>
    <property type="evidence" value="ECO:0000315"/>
    <property type="project" value="MGI"/>
</dbReference>
<dbReference type="GO" id="GO:0010629">
    <property type="term" value="P:negative regulation of gene expression"/>
    <property type="evidence" value="ECO:0000315"/>
    <property type="project" value="MGI"/>
</dbReference>
<dbReference type="GO" id="GO:0007399">
    <property type="term" value="P:nervous system development"/>
    <property type="evidence" value="ECO:0007669"/>
    <property type="project" value="UniProtKB-KW"/>
</dbReference>
<dbReference type="GO" id="GO:0010628">
    <property type="term" value="P:positive regulation of gene expression"/>
    <property type="evidence" value="ECO:0000315"/>
    <property type="project" value="MGI"/>
</dbReference>
<dbReference type="GO" id="GO:0045944">
    <property type="term" value="P:positive regulation of transcription by RNA polymerase II"/>
    <property type="evidence" value="ECO:0000314"/>
    <property type="project" value="NTNU_SB"/>
</dbReference>
<dbReference type="GO" id="GO:0009791">
    <property type="term" value="P:post-embryonic development"/>
    <property type="evidence" value="ECO:0000315"/>
    <property type="project" value="MGI"/>
</dbReference>
<dbReference type="GO" id="GO:0032350">
    <property type="term" value="P:regulation of hormone metabolic process"/>
    <property type="evidence" value="ECO:0000315"/>
    <property type="project" value="MGI"/>
</dbReference>
<dbReference type="GO" id="GO:0061178">
    <property type="term" value="P:regulation of insulin secretion involved in cellular response to glucose stimulus"/>
    <property type="evidence" value="ECO:0000315"/>
    <property type="project" value="MGI"/>
</dbReference>
<dbReference type="FunFam" id="4.10.320.30:FF:000001">
    <property type="entry name" value="Myelin transcription factor 1-like, a"/>
    <property type="match status" value="7"/>
</dbReference>
<dbReference type="Gene3D" id="4.10.320.30">
    <property type="match status" value="7"/>
</dbReference>
<dbReference type="InterPro" id="IPR013681">
    <property type="entry name" value="Myelin_TF"/>
</dbReference>
<dbReference type="InterPro" id="IPR002515">
    <property type="entry name" value="Znf_C2H2C"/>
</dbReference>
<dbReference type="InterPro" id="IPR036060">
    <property type="entry name" value="Znf_C2H2C_sf"/>
</dbReference>
<dbReference type="PANTHER" id="PTHR10816:SF15">
    <property type="entry name" value="MYELIN TRANSCRIPTION FACTOR 1-LIKE PROTEIN"/>
    <property type="match status" value="1"/>
</dbReference>
<dbReference type="PANTHER" id="PTHR10816">
    <property type="entry name" value="MYELIN TRANSCRIPTION FACTOR 1-RELATED"/>
    <property type="match status" value="1"/>
</dbReference>
<dbReference type="Pfam" id="PF08474">
    <property type="entry name" value="MYT1"/>
    <property type="match status" value="2"/>
</dbReference>
<dbReference type="Pfam" id="PF01530">
    <property type="entry name" value="zf-C2HC"/>
    <property type="match status" value="7"/>
</dbReference>
<dbReference type="SUPFAM" id="SSF103637">
    <property type="entry name" value="CCHHC domain"/>
    <property type="match status" value="7"/>
</dbReference>
<dbReference type="PROSITE" id="PS51802">
    <property type="entry name" value="ZF_CCHHC"/>
    <property type="match status" value="7"/>
</dbReference>